<reference key="1">
    <citation type="journal article" date="2009" name="Appl. Environ. Microbiol.">
        <title>Genomic analysis of 'Elusimicrobium minutum,' the first cultivated representative of the phylum 'Elusimicrobia' (formerly termite group 1).</title>
        <authorList>
            <person name="Herlemann D.P.R."/>
            <person name="Geissinger O."/>
            <person name="Ikeda-Ohtsubo W."/>
            <person name="Kunin V."/>
            <person name="Sun H."/>
            <person name="Lapidus A."/>
            <person name="Hugenholtz P."/>
            <person name="Brune A."/>
        </authorList>
    </citation>
    <scope>NUCLEOTIDE SEQUENCE [LARGE SCALE GENOMIC DNA]</scope>
    <source>
        <strain>Pei191</strain>
    </source>
</reference>
<feature type="chain" id="PRO_1000129659" description="Co-chaperonin GroES">
    <location>
        <begin position="1"/>
        <end position="97"/>
    </location>
</feature>
<accession>B2KD82</accession>
<organism>
    <name type="scientific">Elusimicrobium minutum (strain Pei191)</name>
    <dbReference type="NCBI Taxonomy" id="445932"/>
    <lineage>
        <taxon>Bacteria</taxon>
        <taxon>Pseudomonadati</taxon>
        <taxon>Elusimicrobiota</taxon>
        <taxon>Elusimicrobia</taxon>
        <taxon>Elusimicrobiales</taxon>
        <taxon>Elusimicrobiaceae</taxon>
        <taxon>Elusimicrobium</taxon>
    </lineage>
</organism>
<gene>
    <name evidence="1" type="primary">groES</name>
    <name evidence="1" type="synonym">groS</name>
    <name type="ordered locus">Emin_0925</name>
</gene>
<evidence type="ECO:0000255" key="1">
    <source>
        <dbReference type="HAMAP-Rule" id="MF_00580"/>
    </source>
</evidence>
<protein>
    <recommendedName>
        <fullName evidence="1">Co-chaperonin GroES</fullName>
    </recommendedName>
    <alternativeName>
        <fullName evidence="1">10 kDa chaperonin</fullName>
    </alternativeName>
    <alternativeName>
        <fullName evidence="1">Chaperonin-10</fullName>
        <shortName evidence="1">Cpn10</shortName>
    </alternativeName>
</protein>
<dbReference type="EMBL" id="CP001055">
    <property type="protein sequence ID" value="ACC98478.1"/>
    <property type="molecule type" value="Genomic_DNA"/>
</dbReference>
<dbReference type="RefSeq" id="WP_012415093.1">
    <property type="nucleotide sequence ID" value="NC_010644.1"/>
</dbReference>
<dbReference type="SMR" id="B2KD82"/>
<dbReference type="STRING" id="445932.Emin_0925"/>
<dbReference type="KEGG" id="emi:Emin_0925"/>
<dbReference type="HOGENOM" id="CLU_132825_2_0_0"/>
<dbReference type="OrthoDB" id="9806791at2"/>
<dbReference type="Proteomes" id="UP000001029">
    <property type="component" value="Chromosome"/>
</dbReference>
<dbReference type="GO" id="GO:0005737">
    <property type="term" value="C:cytoplasm"/>
    <property type="evidence" value="ECO:0007669"/>
    <property type="project" value="UniProtKB-SubCell"/>
</dbReference>
<dbReference type="GO" id="GO:0005524">
    <property type="term" value="F:ATP binding"/>
    <property type="evidence" value="ECO:0007669"/>
    <property type="project" value="InterPro"/>
</dbReference>
<dbReference type="GO" id="GO:0046872">
    <property type="term" value="F:metal ion binding"/>
    <property type="evidence" value="ECO:0007669"/>
    <property type="project" value="TreeGrafter"/>
</dbReference>
<dbReference type="GO" id="GO:0044183">
    <property type="term" value="F:protein folding chaperone"/>
    <property type="evidence" value="ECO:0007669"/>
    <property type="project" value="InterPro"/>
</dbReference>
<dbReference type="GO" id="GO:0051087">
    <property type="term" value="F:protein-folding chaperone binding"/>
    <property type="evidence" value="ECO:0007669"/>
    <property type="project" value="TreeGrafter"/>
</dbReference>
<dbReference type="GO" id="GO:0051082">
    <property type="term" value="F:unfolded protein binding"/>
    <property type="evidence" value="ECO:0007669"/>
    <property type="project" value="TreeGrafter"/>
</dbReference>
<dbReference type="GO" id="GO:0051085">
    <property type="term" value="P:chaperone cofactor-dependent protein refolding"/>
    <property type="evidence" value="ECO:0007669"/>
    <property type="project" value="TreeGrafter"/>
</dbReference>
<dbReference type="CDD" id="cd00320">
    <property type="entry name" value="cpn10"/>
    <property type="match status" value="1"/>
</dbReference>
<dbReference type="FunFam" id="2.30.33.40:FF:000001">
    <property type="entry name" value="10 kDa chaperonin"/>
    <property type="match status" value="1"/>
</dbReference>
<dbReference type="Gene3D" id="2.30.33.40">
    <property type="entry name" value="GroES chaperonin"/>
    <property type="match status" value="1"/>
</dbReference>
<dbReference type="HAMAP" id="MF_00580">
    <property type="entry name" value="CH10"/>
    <property type="match status" value="1"/>
</dbReference>
<dbReference type="InterPro" id="IPR020818">
    <property type="entry name" value="Chaperonin_GroES"/>
</dbReference>
<dbReference type="InterPro" id="IPR037124">
    <property type="entry name" value="Chaperonin_GroES_sf"/>
</dbReference>
<dbReference type="InterPro" id="IPR018369">
    <property type="entry name" value="Chaprnonin_Cpn10_CS"/>
</dbReference>
<dbReference type="InterPro" id="IPR011032">
    <property type="entry name" value="GroES-like_sf"/>
</dbReference>
<dbReference type="NCBIfam" id="NF001531">
    <property type="entry name" value="PRK00364.2-2"/>
    <property type="match status" value="1"/>
</dbReference>
<dbReference type="NCBIfam" id="NF001533">
    <property type="entry name" value="PRK00364.2-4"/>
    <property type="match status" value="1"/>
</dbReference>
<dbReference type="PANTHER" id="PTHR10772">
    <property type="entry name" value="10 KDA HEAT SHOCK PROTEIN"/>
    <property type="match status" value="1"/>
</dbReference>
<dbReference type="PANTHER" id="PTHR10772:SF63">
    <property type="entry name" value="20 KDA CHAPERONIN, CHLOROPLASTIC"/>
    <property type="match status" value="1"/>
</dbReference>
<dbReference type="Pfam" id="PF00166">
    <property type="entry name" value="Cpn10"/>
    <property type="match status" value="1"/>
</dbReference>
<dbReference type="PRINTS" id="PR00297">
    <property type="entry name" value="CHAPERONIN10"/>
</dbReference>
<dbReference type="SMART" id="SM00883">
    <property type="entry name" value="Cpn10"/>
    <property type="match status" value="1"/>
</dbReference>
<dbReference type="SUPFAM" id="SSF50129">
    <property type="entry name" value="GroES-like"/>
    <property type="match status" value="1"/>
</dbReference>
<dbReference type="PROSITE" id="PS00681">
    <property type="entry name" value="CHAPERONINS_CPN10"/>
    <property type="match status" value="1"/>
</dbReference>
<comment type="function">
    <text evidence="1">Together with the chaperonin GroEL, plays an essential role in assisting protein folding. The GroEL-GroES system forms a nano-cage that allows encapsulation of the non-native substrate proteins and provides a physical environment optimized to promote and accelerate protein folding. GroES binds to the apical surface of the GroEL ring, thereby capping the opening of the GroEL channel.</text>
</comment>
<comment type="subunit">
    <text evidence="1">Heptamer of 7 subunits arranged in a ring. Interacts with the chaperonin GroEL.</text>
</comment>
<comment type="subcellular location">
    <subcellularLocation>
        <location evidence="1">Cytoplasm</location>
    </subcellularLocation>
</comment>
<comment type="similarity">
    <text evidence="1">Belongs to the GroES chaperonin family.</text>
</comment>
<sequence>MGEVNIAPLGDRIIVKPIEREVMKSGIIIPDTAKEKPMEGEVVAAGPGKLGEKGERAPMDVKKGDKVLYGKYSGTEVKINDKNYLIMHQDDVLGIIK</sequence>
<name>CH10_ELUMP</name>
<keyword id="KW-0143">Chaperone</keyword>
<keyword id="KW-0963">Cytoplasm</keyword>
<keyword id="KW-1185">Reference proteome</keyword>
<proteinExistence type="inferred from homology"/>